<gene>
    <name evidence="1" type="primary">guaA</name>
    <name type="ordered locus">BF0969</name>
</gene>
<evidence type="ECO:0000255" key="1">
    <source>
        <dbReference type="HAMAP-Rule" id="MF_00344"/>
    </source>
</evidence>
<keyword id="KW-0067">ATP-binding</keyword>
<keyword id="KW-0315">Glutamine amidotransferase</keyword>
<keyword id="KW-0332">GMP biosynthesis</keyword>
<keyword id="KW-0436">Ligase</keyword>
<keyword id="KW-0547">Nucleotide-binding</keyword>
<keyword id="KW-0658">Purine biosynthesis</keyword>
<dbReference type="EC" id="6.3.5.2" evidence="1"/>
<dbReference type="EMBL" id="AP006841">
    <property type="protein sequence ID" value="BAD47719.1"/>
    <property type="molecule type" value="Genomic_DNA"/>
</dbReference>
<dbReference type="RefSeq" id="WP_005785252.1">
    <property type="nucleotide sequence ID" value="NZ_UYXF01000032.1"/>
</dbReference>
<dbReference type="RefSeq" id="YP_098253.1">
    <property type="nucleotide sequence ID" value="NC_006347.1"/>
</dbReference>
<dbReference type="SMR" id="Q64XQ7"/>
<dbReference type="STRING" id="295405.BF0969"/>
<dbReference type="MEROPS" id="C26.957"/>
<dbReference type="GeneID" id="60368196"/>
<dbReference type="KEGG" id="bfr:BF0969"/>
<dbReference type="PATRIC" id="fig|295405.11.peg.969"/>
<dbReference type="HOGENOM" id="CLU_014340_0_5_10"/>
<dbReference type="OrthoDB" id="9802219at2"/>
<dbReference type="UniPathway" id="UPA00189">
    <property type="reaction ID" value="UER00296"/>
</dbReference>
<dbReference type="Proteomes" id="UP000002197">
    <property type="component" value="Chromosome"/>
</dbReference>
<dbReference type="GO" id="GO:0005829">
    <property type="term" value="C:cytosol"/>
    <property type="evidence" value="ECO:0007669"/>
    <property type="project" value="TreeGrafter"/>
</dbReference>
<dbReference type="GO" id="GO:0005524">
    <property type="term" value="F:ATP binding"/>
    <property type="evidence" value="ECO:0007669"/>
    <property type="project" value="UniProtKB-UniRule"/>
</dbReference>
<dbReference type="GO" id="GO:0003921">
    <property type="term" value="F:GMP synthase activity"/>
    <property type="evidence" value="ECO:0007669"/>
    <property type="project" value="InterPro"/>
</dbReference>
<dbReference type="CDD" id="cd01742">
    <property type="entry name" value="GATase1_GMP_Synthase"/>
    <property type="match status" value="1"/>
</dbReference>
<dbReference type="CDD" id="cd01997">
    <property type="entry name" value="GMP_synthase_C"/>
    <property type="match status" value="1"/>
</dbReference>
<dbReference type="FunFam" id="3.30.300.10:FF:000002">
    <property type="entry name" value="GMP synthase [glutamine-hydrolyzing]"/>
    <property type="match status" value="1"/>
</dbReference>
<dbReference type="FunFam" id="3.40.50.620:FF:000001">
    <property type="entry name" value="GMP synthase [glutamine-hydrolyzing]"/>
    <property type="match status" value="1"/>
</dbReference>
<dbReference type="FunFam" id="3.40.50.880:FF:000001">
    <property type="entry name" value="GMP synthase [glutamine-hydrolyzing]"/>
    <property type="match status" value="1"/>
</dbReference>
<dbReference type="Gene3D" id="3.30.300.10">
    <property type="match status" value="1"/>
</dbReference>
<dbReference type="Gene3D" id="3.40.50.880">
    <property type="match status" value="1"/>
</dbReference>
<dbReference type="Gene3D" id="3.40.50.620">
    <property type="entry name" value="HUPs"/>
    <property type="match status" value="1"/>
</dbReference>
<dbReference type="HAMAP" id="MF_00344">
    <property type="entry name" value="GMP_synthase"/>
    <property type="match status" value="1"/>
</dbReference>
<dbReference type="InterPro" id="IPR029062">
    <property type="entry name" value="Class_I_gatase-like"/>
</dbReference>
<dbReference type="InterPro" id="IPR017926">
    <property type="entry name" value="GATASE"/>
</dbReference>
<dbReference type="InterPro" id="IPR001674">
    <property type="entry name" value="GMP_synth_C"/>
</dbReference>
<dbReference type="InterPro" id="IPR004739">
    <property type="entry name" value="GMP_synth_GATase"/>
</dbReference>
<dbReference type="InterPro" id="IPR022955">
    <property type="entry name" value="GMP_synthase"/>
</dbReference>
<dbReference type="InterPro" id="IPR025777">
    <property type="entry name" value="GMPS_ATP_PPase_dom"/>
</dbReference>
<dbReference type="InterPro" id="IPR022310">
    <property type="entry name" value="NAD/GMP_synthase"/>
</dbReference>
<dbReference type="InterPro" id="IPR014729">
    <property type="entry name" value="Rossmann-like_a/b/a_fold"/>
</dbReference>
<dbReference type="NCBIfam" id="TIGR00884">
    <property type="entry name" value="guaA_Cterm"/>
    <property type="match status" value="1"/>
</dbReference>
<dbReference type="NCBIfam" id="TIGR00888">
    <property type="entry name" value="guaA_Nterm"/>
    <property type="match status" value="1"/>
</dbReference>
<dbReference type="NCBIfam" id="NF000848">
    <property type="entry name" value="PRK00074.1"/>
    <property type="match status" value="1"/>
</dbReference>
<dbReference type="PANTHER" id="PTHR11922:SF2">
    <property type="entry name" value="GMP SYNTHASE [GLUTAMINE-HYDROLYZING]"/>
    <property type="match status" value="1"/>
</dbReference>
<dbReference type="PANTHER" id="PTHR11922">
    <property type="entry name" value="GMP SYNTHASE-RELATED"/>
    <property type="match status" value="1"/>
</dbReference>
<dbReference type="Pfam" id="PF00117">
    <property type="entry name" value="GATase"/>
    <property type="match status" value="1"/>
</dbReference>
<dbReference type="Pfam" id="PF00958">
    <property type="entry name" value="GMP_synt_C"/>
    <property type="match status" value="1"/>
</dbReference>
<dbReference type="Pfam" id="PF02540">
    <property type="entry name" value="NAD_synthase"/>
    <property type="match status" value="1"/>
</dbReference>
<dbReference type="PRINTS" id="PR00096">
    <property type="entry name" value="GATASE"/>
</dbReference>
<dbReference type="SUPFAM" id="SSF52402">
    <property type="entry name" value="Adenine nucleotide alpha hydrolases-like"/>
    <property type="match status" value="1"/>
</dbReference>
<dbReference type="SUPFAM" id="SSF52317">
    <property type="entry name" value="Class I glutamine amidotransferase-like"/>
    <property type="match status" value="1"/>
</dbReference>
<dbReference type="SUPFAM" id="SSF54810">
    <property type="entry name" value="GMP synthetase C-terminal dimerisation domain"/>
    <property type="match status" value="1"/>
</dbReference>
<dbReference type="PROSITE" id="PS51273">
    <property type="entry name" value="GATASE_TYPE_1"/>
    <property type="match status" value="1"/>
</dbReference>
<dbReference type="PROSITE" id="PS51553">
    <property type="entry name" value="GMPS_ATP_PPASE"/>
    <property type="match status" value="1"/>
</dbReference>
<protein>
    <recommendedName>
        <fullName evidence="1">GMP synthase [glutamine-hydrolyzing]</fullName>
        <ecNumber evidence="1">6.3.5.2</ecNumber>
    </recommendedName>
    <alternativeName>
        <fullName evidence="1">GMP synthetase</fullName>
    </alternativeName>
    <alternativeName>
        <fullName evidence="1">Glutamine amidotransferase</fullName>
    </alternativeName>
</protein>
<organism>
    <name type="scientific">Bacteroides fragilis (strain YCH46)</name>
    <dbReference type="NCBI Taxonomy" id="295405"/>
    <lineage>
        <taxon>Bacteria</taxon>
        <taxon>Pseudomonadati</taxon>
        <taxon>Bacteroidota</taxon>
        <taxon>Bacteroidia</taxon>
        <taxon>Bacteroidales</taxon>
        <taxon>Bacteroidaceae</taxon>
        <taxon>Bacteroides</taxon>
    </lineage>
</organism>
<sequence>MQEKIIILDFGSQTTQLIGRRVRELDTYCEIVPYNKFPKGDETVKGVILSGSPFSVYDESAFKVDLSEIRGKYPILGICYGAQFMAYTNGGKVEPAGTREYGRAHLTSFCKDNVLFKGVREGTQVWMSHGDTITAIPENFKTIASTDKVAIAAYQVEGEQVWGVQFHPEVFHSEDGTQMLRNFVVDVCGCKQDWSPASFIESTVAELKAQLGDDKVVLGLSGGVDSSVAAVLLNRAIGKNLTCIFVDHGMLRKNEFKNVMHDYECLGLNVIGVDASEKFFSELEGVTEPERKRKIIGKGFIDVFDEEAHKLKDVKWLAQGTIYPDCIESLSITGTVIKSHHNVGGLPEKMNLKLCEPLRLLFKDEVRRVGRELGMPEHLITRHPFPGPGLAVRILGDITPEKVRILQDADDIFIQGLRDWGLYDQVWQAGVILLPVQSVGVMGDERTYERAVALRAVTSTDAMTADWAHLPYEFLGKVSNDIINKVKGVNRVTYDISSKPPATIEWE</sequence>
<accession>Q64XQ7</accession>
<feature type="chain" id="PRO_0000229403" description="GMP synthase [glutamine-hydrolyzing]">
    <location>
        <begin position="1"/>
        <end position="507"/>
    </location>
</feature>
<feature type="domain" description="Glutamine amidotransferase type-1" evidence="1">
    <location>
        <begin position="4"/>
        <end position="193"/>
    </location>
</feature>
<feature type="domain" description="GMPS ATP-PPase" evidence="1">
    <location>
        <begin position="194"/>
        <end position="382"/>
    </location>
</feature>
<feature type="active site" description="Nucleophile" evidence="1">
    <location>
        <position position="79"/>
    </location>
</feature>
<feature type="active site" evidence="1">
    <location>
        <position position="167"/>
    </location>
</feature>
<feature type="active site" evidence="1">
    <location>
        <position position="169"/>
    </location>
</feature>
<feature type="binding site" evidence="1">
    <location>
        <begin position="221"/>
        <end position="227"/>
    </location>
    <ligand>
        <name>ATP</name>
        <dbReference type="ChEBI" id="CHEBI:30616"/>
    </ligand>
</feature>
<name>GUAA_BACFR</name>
<reference key="1">
    <citation type="journal article" date="2004" name="Proc. Natl. Acad. Sci. U.S.A.">
        <title>Genomic analysis of Bacteroides fragilis reveals extensive DNA inversions regulating cell surface adaptation.</title>
        <authorList>
            <person name="Kuwahara T."/>
            <person name="Yamashita A."/>
            <person name="Hirakawa H."/>
            <person name="Nakayama H."/>
            <person name="Toh H."/>
            <person name="Okada N."/>
            <person name="Kuhara S."/>
            <person name="Hattori M."/>
            <person name="Hayashi T."/>
            <person name="Ohnishi Y."/>
        </authorList>
    </citation>
    <scope>NUCLEOTIDE SEQUENCE [LARGE SCALE GENOMIC DNA]</scope>
    <source>
        <strain>YCH46</strain>
    </source>
</reference>
<proteinExistence type="inferred from homology"/>
<comment type="function">
    <text evidence="1">Catalyzes the synthesis of GMP from XMP.</text>
</comment>
<comment type="catalytic activity">
    <reaction evidence="1">
        <text>XMP + L-glutamine + ATP + H2O = GMP + L-glutamate + AMP + diphosphate + 2 H(+)</text>
        <dbReference type="Rhea" id="RHEA:11680"/>
        <dbReference type="ChEBI" id="CHEBI:15377"/>
        <dbReference type="ChEBI" id="CHEBI:15378"/>
        <dbReference type="ChEBI" id="CHEBI:29985"/>
        <dbReference type="ChEBI" id="CHEBI:30616"/>
        <dbReference type="ChEBI" id="CHEBI:33019"/>
        <dbReference type="ChEBI" id="CHEBI:57464"/>
        <dbReference type="ChEBI" id="CHEBI:58115"/>
        <dbReference type="ChEBI" id="CHEBI:58359"/>
        <dbReference type="ChEBI" id="CHEBI:456215"/>
        <dbReference type="EC" id="6.3.5.2"/>
    </reaction>
</comment>
<comment type="pathway">
    <text evidence="1">Purine metabolism; GMP biosynthesis; GMP from XMP (L-Gln route): step 1/1.</text>
</comment>
<comment type="subunit">
    <text evidence="1">Homodimer.</text>
</comment>